<name>DF146_ARATH</name>
<feature type="signal peptide" evidence="2">
    <location>
        <begin position="1"/>
        <end position="25"/>
    </location>
</feature>
<feature type="chain" id="PRO_0000017251" description="Putative defensin-like protein 146">
    <location>
        <begin position="26"/>
        <end position="79"/>
    </location>
</feature>
<feature type="disulfide bond" evidence="1">
    <location>
        <begin position="35"/>
        <end position="78"/>
    </location>
</feature>
<feature type="disulfide bond" evidence="1">
    <location>
        <begin position="46"/>
        <end position="66"/>
    </location>
</feature>
<feature type="disulfide bond" evidence="1">
    <location>
        <begin position="51"/>
        <end position="72"/>
    </location>
</feature>
<feature type="disulfide bond" evidence="1">
    <location>
        <begin position="55"/>
        <end position="74"/>
    </location>
</feature>
<sequence>MMKNQFQLSLIILTFFILLELGVMGNVQQVKREQCHTVIPNKSGKCIFTECKSACEKLKKPVASLCLPPKTCRCYHFCS</sequence>
<gene>
    <name type="primary">LCR9</name>
    <name type="ordered locus">At2g27145</name>
    <name type="ORF">F20F1</name>
</gene>
<protein>
    <recommendedName>
        <fullName>Putative defensin-like protein 146</fullName>
    </recommendedName>
    <alternativeName>
        <fullName>Putative low-molecular-weight cysteine-rich protein 9</fullName>
        <shortName>Protein LCR9</shortName>
    </alternativeName>
</protein>
<comment type="subcellular location">
    <subcellularLocation>
        <location evidence="1">Secreted</location>
    </subcellularLocation>
</comment>
<comment type="similarity">
    <text evidence="3">Belongs to the DEFL family.</text>
</comment>
<organism evidence="3">
    <name type="scientific">Arabidopsis thaliana</name>
    <name type="common">Mouse-ear cress</name>
    <dbReference type="NCBI Taxonomy" id="3702"/>
    <lineage>
        <taxon>Eukaryota</taxon>
        <taxon>Viridiplantae</taxon>
        <taxon>Streptophyta</taxon>
        <taxon>Embryophyta</taxon>
        <taxon>Tracheophyta</taxon>
        <taxon>Spermatophyta</taxon>
        <taxon>Magnoliopsida</taxon>
        <taxon>eudicotyledons</taxon>
        <taxon>Gunneridae</taxon>
        <taxon>Pentapetalae</taxon>
        <taxon>rosids</taxon>
        <taxon>malvids</taxon>
        <taxon>Brassicales</taxon>
        <taxon>Brassicaceae</taxon>
        <taxon>Camelineae</taxon>
        <taxon>Arabidopsis</taxon>
    </lineage>
</organism>
<evidence type="ECO:0000250" key="1"/>
<evidence type="ECO:0000255" key="2"/>
<evidence type="ECO:0000305" key="3"/>
<dbReference type="EMBL" id="AC007154">
    <property type="status" value="NOT_ANNOTATED_CDS"/>
    <property type="molecule type" value="Genomic_DNA"/>
</dbReference>
<dbReference type="EMBL" id="CP002685">
    <property type="protein sequence ID" value="AEC07943.1"/>
    <property type="molecule type" value="Genomic_DNA"/>
</dbReference>
<dbReference type="RefSeq" id="NP_001031429.1">
    <property type="nucleotide sequence ID" value="NM_001036352.2"/>
</dbReference>
<dbReference type="SMR" id="P82724"/>
<dbReference type="PaxDb" id="3702-AT2G27145.1"/>
<dbReference type="ProteomicsDB" id="224000"/>
<dbReference type="EnsemblPlants" id="AT2G27145.1">
    <property type="protein sequence ID" value="AT2G27145.1"/>
    <property type="gene ID" value="AT2G27145"/>
</dbReference>
<dbReference type="GeneID" id="3768128"/>
<dbReference type="Gramene" id="AT2G27145.1">
    <property type="protein sequence ID" value="AT2G27145.1"/>
    <property type="gene ID" value="AT2G27145"/>
</dbReference>
<dbReference type="KEGG" id="ath:AT2G27145"/>
<dbReference type="Araport" id="AT2G27145"/>
<dbReference type="TAIR" id="AT2G27145">
    <property type="gene designation" value="LCR9"/>
</dbReference>
<dbReference type="HOGENOM" id="CLU_182511_0_0_1"/>
<dbReference type="InParanoid" id="P82724"/>
<dbReference type="OMA" id="CLPPKTC"/>
<dbReference type="OrthoDB" id="1123993at2759"/>
<dbReference type="PhylomeDB" id="P82724"/>
<dbReference type="PRO" id="PR:P82724"/>
<dbReference type="Proteomes" id="UP000006548">
    <property type="component" value="Chromosome 2"/>
</dbReference>
<dbReference type="ExpressionAtlas" id="P82724">
    <property type="expression patterns" value="baseline"/>
</dbReference>
<dbReference type="GO" id="GO:0005576">
    <property type="term" value="C:extracellular region"/>
    <property type="evidence" value="ECO:0007669"/>
    <property type="project" value="UniProtKB-SubCell"/>
</dbReference>
<dbReference type="GO" id="GO:0050832">
    <property type="term" value="P:defense response to fungus"/>
    <property type="evidence" value="ECO:0007669"/>
    <property type="project" value="UniProtKB-KW"/>
</dbReference>
<dbReference type="GO" id="GO:0031640">
    <property type="term" value="P:killing of cells of another organism"/>
    <property type="evidence" value="ECO:0007669"/>
    <property type="project" value="UniProtKB-KW"/>
</dbReference>
<dbReference type="InterPro" id="IPR010851">
    <property type="entry name" value="DEFL"/>
</dbReference>
<dbReference type="PANTHER" id="PTHR34783">
    <property type="entry name" value="DEFENSIN-LIKE PROTEIN 144-RELATED"/>
    <property type="match status" value="1"/>
</dbReference>
<dbReference type="PANTHER" id="PTHR34783:SF1">
    <property type="entry name" value="DEFENSIN-LIKE PROTEIN 144-RELATED"/>
    <property type="match status" value="1"/>
</dbReference>
<dbReference type="Pfam" id="PF07333">
    <property type="entry name" value="SLR1-BP"/>
    <property type="match status" value="1"/>
</dbReference>
<reference evidence="3" key="1">
    <citation type="journal article" date="1999" name="Nature">
        <title>Sequence and analysis of chromosome 2 of the plant Arabidopsis thaliana.</title>
        <authorList>
            <person name="Lin X."/>
            <person name="Kaul S."/>
            <person name="Rounsley S.D."/>
            <person name="Shea T.P."/>
            <person name="Benito M.-I."/>
            <person name="Town C.D."/>
            <person name="Fujii C.Y."/>
            <person name="Mason T.M."/>
            <person name="Bowman C.L."/>
            <person name="Barnstead M.E."/>
            <person name="Feldblyum T.V."/>
            <person name="Buell C.R."/>
            <person name="Ketchum K.A."/>
            <person name="Lee J.J."/>
            <person name="Ronning C.M."/>
            <person name="Koo H.L."/>
            <person name="Moffat K.S."/>
            <person name="Cronin L.A."/>
            <person name="Shen M."/>
            <person name="Pai G."/>
            <person name="Van Aken S."/>
            <person name="Umayam L."/>
            <person name="Tallon L.J."/>
            <person name="Gill J.E."/>
            <person name="Adams M.D."/>
            <person name="Carrera A.J."/>
            <person name="Creasy T.H."/>
            <person name="Goodman H.M."/>
            <person name="Somerville C.R."/>
            <person name="Copenhaver G.P."/>
            <person name="Preuss D."/>
            <person name="Nierman W.C."/>
            <person name="White O."/>
            <person name="Eisen J.A."/>
            <person name="Salzberg S.L."/>
            <person name="Fraser C.M."/>
            <person name="Venter J.C."/>
        </authorList>
    </citation>
    <scope>NUCLEOTIDE SEQUENCE [LARGE SCALE GENOMIC DNA]</scope>
    <source>
        <strain>cv. Columbia</strain>
    </source>
</reference>
<reference key="2">
    <citation type="journal article" date="2017" name="Plant J.">
        <title>Araport11: a complete reannotation of the Arabidopsis thaliana reference genome.</title>
        <authorList>
            <person name="Cheng C.Y."/>
            <person name="Krishnakumar V."/>
            <person name="Chan A.P."/>
            <person name="Thibaud-Nissen F."/>
            <person name="Schobel S."/>
            <person name="Town C.D."/>
        </authorList>
    </citation>
    <scope>GENOME REANNOTATION</scope>
    <source>
        <strain>cv. Columbia</strain>
    </source>
</reference>
<reference evidence="3" key="3">
    <citation type="journal article" date="2001" name="Plant Mol. Biol.">
        <title>Two large Arabidopsis thaliana gene families are homologous to the Brassica gene superfamily that encodes pollen coat proteins and the male component of the self-incompatibility response.</title>
        <authorList>
            <person name="Vanoosthuyse V."/>
            <person name="Miege C."/>
            <person name="Dumas C."/>
            <person name="Cock J.M."/>
        </authorList>
    </citation>
    <scope>IDENTIFICATION</scope>
</reference>
<reference key="4">
    <citation type="journal article" date="2005" name="Plant Physiol.">
        <title>Genome organization of more than 300 defensin-like genes in Arabidopsis.</title>
        <authorList>
            <person name="Silverstein K.A.T."/>
            <person name="Graham M.A."/>
            <person name="Paape T.D."/>
            <person name="VandenBosch K.A."/>
        </authorList>
    </citation>
    <scope>GENE FAMILY</scope>
</reference>
<proteinExistence type="inferred from homology"/>
<keyword id="KW-0929">Antimicrobial</keyword>
<keyword id="KW-1015">Disulfide bond</keyword>
<keyword id="KW-0295">Fungicide</keyword>
<keyword id="KW-0611">Plant defense</keyword>
<keyword id="KW-1185">Reference proteome</keyword>
<keyword id="KW-0964">Secreted</keyword>
<keyword id="KW-0732">Signal</keyword>
<accession>P82724</accession>